<reference key="1">
    <citation type="journal article" date="2007" name="J. Bacteriol.">
        <title>Genome sequence of Avery's virulent serotype 2 strain D39 of Streptococcus pneumoniae and comparison with that of unencapsulated laboratory strain R6.</title>
        <authorList>
            <person name="Lanie J.A."/>
            <person name="Ng W.-L."/>
            <person name="Kazmierczak K.M."/>
            <person name="Andrzejewski T.M."/>
            <person name="Davidsen T.M."/>
            <person name="Wayne K.J."/>
            <person name="Tettelin H."/>
            <person name="Glass J.I."/>
            <person name="Winkler M.E."/>
        </authorList>
    </citation>
    <scope>NUCLEOTIDE SEQUENCE [LARGE SCALE GENOMIC DNA]</scope>
    <source>
        <strain>D39 / NCTC 7466</strain>
    </source>
</reference>
<name>EFG_STRP2</name>
<proteinExistence type="inferred from homology"/>
<dbReference type="EMBL" id="CP000410">
    <property type="protein sequence ID" value="ABJ55048.1"/>
    <property type="molecule type" value="Genomic_DNA"/>
</dbReference>
<dbReference type="RefSeq" id="WP_000090344.1">
    <property type="nucleotide sequence ID" value="NZ_JAMLJR010000002.1"/>
</dbReference>
<dbReference type="SMR" id="Q04MH7"/>
<dbReference type="PaxDb" id="373153-SPD_0253"/>
<dbReference type="KEGG" id="spd:SPD_0253"/>
<dbReference type="eggNOG" id="COG0480">
    <property type="taxonomic scope" value="Bacteria"/>
</dbReference>
<dbReference type="HOGENOM" id="CLU_002794_4_1_9"/>
<dbReference type="BioCyc" id="SPNE373153:G1G6V-278-MONOMER"/>
<dbReference type="Proteomes" id="UP000001452">
    <property type="component" value="Chromosome"/>
</dbReference>
<dbReference type="GO" id="GO:0005737">
    <property type="term" value="C:cytoplasm"/>
    <property type="evidence" value="ECO:0007669"/>
    <property type="project" value="UniProtKB-SubCell"/>
</dbReference>
<dbReference type="GO" id="GO:0005525">
    <property type="term" value="F:GTP binding"/>
    <property type="evidence" value="ECO:0007669"/>
    <property type="project" value="UniProtKB-UniRule"/>
</dbReference>
<dbReference type="GO" id="GO:0003924">
    <property type="term" value="F:GTPase activity"/>
    <property type="evidence" value="ECO:0007669"/>
    <property type="project" value="InterPro"/>
</dbReference>
<dbReference type="GO" id="GO:0003746">
    <property type="term" value="F:translation elongation factor activity"/>
    <property type="evidence" value="ECO:0007669"/>
    <property type="project" value="UniProtKB-UniRule"/>
</dbReference>
<dbReference type="GO" id="GO:0032790">
    <property type="term" value="P:ribosome disassembly"/>
    <property type="evidence" value="ECO:0007669"/>
    <property type="project" value="TreeGrafter"/>
</dbReference>
<dbReference type="CDD" id="cd01886">
    <property type="entry name" value="EF-G"/>
    <property type="match status" value="1"/>
</dbReference>
<dbReference type="CDD" id="cd16262">
    <property type="entry name" value="EFG_III"/>
    <property type="match status" value="1"/>
</dbReference>
<dbReference type="CDD" id="cd01434">
    <property type="entry name" value="EFG_mtEFG1_IV"/>
    <property type="match status" value="1"/>
</dbReference>
<dbReference type="CDD" id="cd03713">
    <property type="entry name" value="EFG_mtEFG_C"/>
    <property type="match status" value="1"/>
</dbReference>
<dbReference type="CDD" id="cd04088">
    <property type="entry name" value="EFG_mtEFG_II"/>
    <property type="match status" value="1"/>
</dbReference>
<dbReference type="FunFam" id="2.40.30.10:FF:000006">
    <property type="entry name" value="Elongation factor G"/>
    <property type="match status" value="1"/>
</dbReference>
<dbReference type="FunFam" id="3.30.230.10:FF:000003">
    <property type="entry name" value="Elongation factor G"/>
    <property type="match status" value="1"/>
</dbReference>
<dbReference type="FunFam" id="3.30.70.240:FF:000001">
    <property type="entry name" value="Elongation factor G"/>
    <property type="match status" value="1"/>
</dbReference>
<dbReference type="FunFam" id="3.30.70.870:FF:000001">
    <property type="entry name" value="Elongation factor G"/>
    <property type="match status" value="1"/>
</dbReference>
<dbReference type="FunFam" id="3.40.50.300:FF:000029">
    <property type="entry name" value="Elongation factor G"/>
    <property type="match status" value="1"/>
</dbReference>
<dbReference type="Gene3D" id="3.30.230.10">
    <property type="match status" value="1"/>
</dbReference>
<dbReference type="Gene3D" id="3.30.70.240">
    <property type="match status" value="1"/>
</dbReference>
<dbReference type="Gene3D" id="3.30.70.870">
    <property type="entry name" value="Elongation Factor G (Translational Gtpase), domain 3"/>
    <property type="match status" value="1"/>
</dbReference>
<dbReference type="Gene3D" id="3.40.50.300">
    <property type="entry name" value="P-loop containing nucleotide triphosphate hydrolases"/>
    <property type="match status" value="1"/>
</dbReference>
<dbReference type="Gene3D" id="2.40.30.10">
    <property type="entry name" value="Translation factors"/>
    <property type="match status" value="1"/>
</dbReference>
<dbReference type="HAMAP" id="MF_00054_B">
    <property type="entry name" value="EF_G_EF_2_B"/>
    <property type="match status" value="1"/>
</dbReference>
<dbReference type="InterPro" id="IPR053905">
    <property type="entry name" value="EF-G-like_DII"/>
</dbReference>
<dbReference type="InterPro" id="IPR041095">
    <property type="entry name" value="EFG_II"/>
</dbReference>
<dbReference type="InterPro" id="IPR009022">
    <property type="entry name" value="EFG_III"/>
</dbReference>
<dbReference type="InterPro" id="IPR035647">
    <property type="entry name" value="EFG_III/V"/>
</dbReference>
<dbReference type="InterPro" id="IPR047872">
    <property type="entry name" value="EFG_IV"/>
</dbReference>
<dbReference type="InterPro" id="IPR035649">
    <property type="entry name" value="EFG_V"/>
</dbReference>
<dbReference type="InterPro" id="IPR000640">
    <property type="entry name" value="EFG_V-like"/>
</dbReference>
<dbReference type="InterPro" id="IPR031157">
    <property type="entry name" value="G_TR_CS"/>
</dbReference>
<dbReference type="InterPro" id="IPR027417">
    <property type="entry name" value="P-loop_NTPase"/>
</dbReference>
<dbReference type="InterPro" id="IPR020568">
    <property type="entry name" value="Ribosomal_Su5_D2-typ_SF"/>
</dbReference>
<dbReference type="InterPro" id="IPR014721">
    <property type="entry name" value="Ribsml_uS5_D2-typ_fold_subgr"/>
</dbReference>
<dbReference type="InterPro" id="IPR005225">
    <property type="entry name" value="Small_GTP-bd"/>
</dbReference>
<dbReference type="InterPro" id="IPR000795">
    <property type="entry name" value="T_Tr_GTP-bd_dom"/>
</dbReference>
<dbReference type="InterPro" id="IPR009000">
    <property type="entry name" value="Transl_B-barrel_sf"/>
</dbReference>
<dbReference type="InterPro" id="IPR004540">
    <property type="entry name" value="Transl_elong_EFG/EF2"/>
</dbReference>
<dbReference type="InterPro" id="IPR005517">
    <property type="entry name" value="Transl_elong_EFG/EF2_IV"/>
</dbReference>
<dbReference type="NCBIfam" id="TIGR00484">
    <property type="entry name" value="EF-G"/>
    <property type="match status" value="1"/>
</dbReference>
<dbReference type="NCBIfam" id="NF009379">
    <property type="entry name" value="PRK12740.1-3"/>
    <property type="match status" value="1"/>
</dbReference>
<dbReference type="NCBIfam" id="NF009381">
    <property type="entry name" value="PRK12740.1-5"/>
    <property type="match status" value="1"/>
</dbReference>
<dbReference type="NCBIfam" id="TIGR00231">
    <property type="entry name" value="small_GTP"/>
    <property type="match status" value="1"/>
</dbReference>
<dbReference type="PANTHER" id="PTHR43261:SF1">
    <property type="entry name" value="RIBOSOME-RELEASING FACTOR 2, MITOCHONDRIAL"/>
    <property type="match status" value="1"/>
</dbReference>
<dbReference type="PANTHER" id="PTHR43261">
    <property type="entry name" value="TRANSLATION ELONGATION FACTOR G-RELATED"/>
    <property type="match status" value="1"/>
</dbReference>
<dbReference type="Pfam" id="PF22042">
    <property type="entry name" value="EF-G_D2"/>
    <property type="match status" value="1"/>
</dbReference>
<dbReference type="Pfam" id="PF00679">
    <property type="entry name" value="EFG_C"/>
    <property type="match status" value="1"/>
</dbReference>
<dbReference type="Pfam" id="PF14492">
    <property type="entry name" value="EFG_III"/>
    <property type="match status" value="1"/>
</dbReference>
<dbReference type="Pfam" id="PF03764">
    <property type="entry name" value="EFG_IV"/>
    <property type="match status" value="1"/>
</dbReference>
<dbReference type="Pfam" id="PF00009">
    <property type="entry name" value="GTP_EFTU"/>
    <property type="match status" value="1"/>
</dbReference>
<dbReference type="PRINTS" id="PR00315">
    <property type="entry name" value="ELONGATNFCT"/>
</dbReference>
<dbReference type="SMART" id="SM00838">
    <property type="entry name" value="EFG_C"/>
    <property type="match status" value="1"/>
</dbReference>
<dbReference type="SMART" id="SM00889">
    <property type="entry name" value="EFG_IV"/>
    <property type="match status" value="1"/>
</dbReference>
<dbReference type="SUPFAM" id="SSF54980">
    <property type="entry name" value="EF-G C-terminal domain-like"/>
    <property type="match status" value="2"/>
</dbReference>
<dbReference type="SUPFAM" id="SSF52540">
    <property type="entry name" value="P-loop containing nucleoside triphosphate hydrolases"/>
    <property type="match status" value="1"/>
</dbReference>
<dbReference type="SUPFAM" id="SSF54211">
    <property type="entry name" value="Ribosomal protein S5 domain 2-like"/>
    <property type="match status" value="1"/>
</dbReference>
<dbReference type="SUPFAM" id="SSF50447">
    <property type="entry name" value="Translation proteins"/>
    <property type="match status" value="1"/>
</dbReference>
<dbReference type="PROSITE" id="PS00301">
    <property type="entry name" value="G_TR_1"/>
    <property type="match status" value="1"/>
</dbReference>
<dbReference type="PROSITE" id="PS51722">
    <property type="entry name" value="G_TR_2"/>
    <property type="match status" value="1"/>
</dbReference>
<comment type="function">
    <text evidence="1">Catalyzes the GTP-dependent ribosomal translocation step during translation elongation. During this step, the ribosome changes from the pre-translocational (PRE) to the post-translocational (POST) state as the newly formed A-site-bound peptidyl-tRNA and P-site-bound deacylated tRNA move to the P and E sites, respectively. Catalyzes the coordinated movement of the two tRNA molecules, the mRNA and conformational changes in the ribosome.</text>
</comment>
<comment type="subcellular location">
    <subcellularLocation>
        <location evidence="1">Cytoplasm</location>
    </subcellularLocation>
</comment>
<comment type="similarity">
    <text evidence="1">Belongs to the TRAFAC class translation factor GTPase superfamily. Classic translation factor GTPase family. EF-G/EF-2 subfamily.</text>
</comment>
<feature type="chain" id="PRO_1000008887" description="Elongation factor G">
    <location>
        <begin position="1"/>
        <end position="693"/>
    </location>
</feature>
<feature type="domain" description="tr-type G">
    <location>
        <begin position="8"/>
        <end position="282"/>
    </location>
</feature>
<feature type="binding site" evidence="1">
    <location>
        <begin position="17"/>
        <end position="24"/>
    </location>
    <ligand>
        <name>GTP</name>
        <dbReference type="ChEBI" id="CHEBI:37565"/>
    </ligand>
</feature>
<feature type="binding site" evidence="1">
    <location>
        <begin position="81"/>
        <end position="85"/>
    </location>
    <ligand>
        <name>GTP</name>
        <dbReference type="ChEBI" id="CHEBI:37565"/>
    </ligand>
</feature>
<feature type="binding site" evidence="1">
    <location>
        <begin position="135"/>
        <end position="138"/>
    </location>
    <ligand>
        <name>GTP</name>
        <dbReference type="ChEBI" id="CHEBI:37565"/>
    </ligand>
</feature>
<accession>Q04MH7</accession>
<evidence type="ECO:0000255" key="1">
    <source>
        <dbReference type="HAMAP-Rule" id="MF_00054"/>
    </source>
</evidence>
<sequence length="693" mass="76831">MAREFSLEKTRNIGIMAHVDAGKTTTTERILYYTGKIHKIGETHEGASQMDWMEQEQERGITITSAATTAQWNNHRVNIIDTPGHVDFTIEVQRSLRVLDGAVTVLDSQSGVEPQTETVWRQATEYGVPRIVFANKMDKIGADFLYSVSTLHDRLQANAHPIQLPIGSEDDFRGIIDLIKMKAEIYTNDLGTDILEEDIPAEYLDQAQEYREKLIEAVAETDEELMMKYLEGEEITNEELKAGIRKATINVEFFPVLCGSAFKNKGVQLMLDAVIDYLPSPLDIPAIKGINPDTDAEEIRPASDEEPFAALAFKIMTDPFVGRLTFFRVYSGVLQSGSYVLNTSKGKRERIGRILQMHANSRQEIDTVYSGDIAAAVGLKDTTTGDSLTDEKAKIILESINVPEPVIQLMVEPKSKADQDKMGIALQKLAEEDPTFRVETNVETGETVISGMGELHLDVLVDRMRREFKVEANVGAPQVSYRETFRASTQARGFFKRQSGGKGQFGDVWIEFTPNEEGKGFEFENAIVGGVVPREFIPAVEKGLVESMANGVLAGYPMVDVKAKLYDGSYHDVDSSETAFKIAASLSLKEAAKSAQPAILEPMMLVTITVPEENLGDVMGHVTARRGRVDGMEAHGNSQIVRAYVPLAEMFGYATVLRSASQGRGTFMMVFDHYEDVPKSVQEEIIKKNKGED</sequence>
<keyword id="KW-0963">Cytoplasm</keyword>
<keyword id="KW-0251">Elongation factor</keyword>
<keyword id="KW-0342">GTP-binding</keyword>
<keyword id="KW-0547">Nucleotide-binding</keyword>
<keyword id="KW-0648">Protein biosynthesis</keyword>
<keyword id="KW-1185">Reference proteome</keyword>
<gene>
    <name evidence="1" type="primary">fusA</name>
    <name type="ordered locus">SPD_0253</name>
</gene>
<protein>
    <recommendedName>
        <fullName evidence="1">Elongation factor G</fullName>
        <shortName evidence="1">EF-G</shortName>
    </recommendedName>
</protein>
<organism>
    <name type="scientific">Streptococcus pneumoniae serotype 2 (strain D39 / NCTC 7466)</name>
    <dbReference type="NCBI Taxonomy" id="373153"/>
    <lineage>
        <taxon>Bacteria</taxon>
        <taxon>Bacillati</taxon>
        <taxon>Bacillota</taxon>
        <taxon>Bacilli</taxon>
        <taxon>Lactobacillales</taxon>
        <taxon>Streptococcaceae</taxon>
        <taxon>Streptococcus</taxon>
    </lineage>
</organism>